<comment type="function">
    <text evidence="1">Binds to 23S rRNA. Forms part of two intersubunit bridges in the 70S ribosome.</text>
</comment>
<comment type="subunit">
    <text evidence="1">Part of the 50S ribosomal subunit. Forms a cluster with proteins L3 and L19. In the 70S ribosome, L14 and L19 interact and together make contacts with the 16S rRNA in bridges B5 and B8.</text>
</comment>
<comment type="similarity">
    <text evidence="1">Belongs to the universal ribosomal protein uL14 family.</text>
</comment>
<keyword id="KW-1185">Reference proteome</keyword>
<keyword id="KW-0687">Ribonucleoprotein</keyword>
<keyword id="KW-0689">Ribosomal protein</keyword>
<keyword id="KW-0694">RNA-binding</keyword>
<keyword id="KW-0699">rRNA-binding</keyword>
<name>RL14_THERP</name>
<gene>
    <name evidence="1" type="primary">rplN</name>
    <name type="ordered locus">trd_0974</name>
</gene>
<evidence type="ECO:0000255" key="1">
    <source>
        <dbReference type="HAMAP-Rule" id="MF_01367"/>
    </source>
</evidence>
<evidence type="ECO:0000305" key="2"/>
<sequence length="122" mass="13551">MIQPLSKLVVADNTGAKEIMCIRVLGGSKHRYGTVGDLIVASVKKAEPNAAVKKGDVVYAVIVRTKKEYRRKDGSYIKFDDNAAVLVTPQGQPRGTRIFGPVARELREKHYMRIISLAPEVW</sequence>
<organism>
    <name type="scientific">Thermomicrobium roseum (strain ATCC 27502 / DSM 5159 / P-2)</name>
    <dbReference type="NCBI Taxonomy" id="309801"/>
    <lineage>
        <taxon>Bacteria</taxon>
        <taxon>Pseudomonadati</taxon>
        <taxon>Thermomicrobiota</taxon>
        <taxon>Thermomicrobia</taxon>
        <taxon>Thermomicrobiales</taxon>
        <taxon>Thermomicrobiaceae</taxon>
        <taxon>Thermomicrobium</taxon>
    </lineage>
</organism>
<feature type="chain" id="PRO_1000166946" description="Large ribosomal subunit protein uL14">
    <location>
        <begin position="1"/>
        <end position="122"/>
    </location>
</feature>
<reference key="1">
    <citation type="journal article" date="2009" name="PLoS ONE">
        <title>Complete genome sequence of the aerobic CO-oxidizing thermophile Thermomicrobium roseum.</title>
        <authorList>
            <person name="Wu D."/>
            <person name="Raymond J."/>
            <person name="Wu M."/>
            <person name="Chatterji S."/>
            <person name="Ren Q."/>
            <person name="Graham J.E."/>
            <person name="Bryant D.A."/>
            <person name="Robb F."/>
            <person name="Colman A."/>
            <person name="Tallon L.J."/>
            <person name="Badger J.H."/>
            <person name="Madupu R."/>
            <person name="Ward N.L."/>
            <person name="Eisen J.A."/>
        </authorList>
    </citation>
    <scope>NUCLEOTIDE SEQUENCE [LARGE SCALE GENOMIC DNA]</scope>
    <source>
        <strain>ATCC 27502 / DSM 5159 / P-2</strain>
    </source>
</reference>
<accession>B9KZX7</accession>
<proteinExistence type="inferred from homology"/>
<dbReference type="EMBL" id="CP001275">
    <property type="protein sequence ID" value="ACM04641.1"/>
    <property type="molecule type" value="Genomic_DNA"/>
</dbReference>
<dbReference type="RefSeq" id="WP_015921938.1">
    <property type="nucleotide sequence ID" value="NC_011959.1"/>
</dbReference>
<dbReference type="SMR" id="B9KZX7"/>
<dbReference type="STRING" id="309801.trd_0974"/>
<dbReference type="KEGG" id="tro:trd_0974"/>
<dbReference type="eggNOG" id="COG0093">
    <property type="taxonomic scope" value="Bacteria"/>
</dbReference>
<dbReference type="HOGENOM" id="CLU_095071_2_1_0"/>
<dbReference type="OrthoDB" id="9806379at2"/>
<dbReference type="Proteomes" id="UP000000447">
    <property type="component" value="Chromosome"/>
</dbReference>
<dbReference type="GO" id="GO:0022625">
    <property type="term" value="C:cytosolic large ribosomal subunit"/>
    <property type="evidence" value="ECO:0007669"/>
    <property type="project" value="TreeGrafter"/>
</dbReference>
<dbReference type="GO" id="GO:0070180">
    <property type="term" value="F:large ribosomal subunit rRNA binding"/>
    <property type="evidence" value="ECO:0007669"/>
    <property type="project" value="TreeGrafter"/>
</dbReference>
<dbReference type="GO" id="GO:0003735">
    <property type="term" value="F:structural constituent of ribosome"/>
    <property type="evidence" value="ECO:0007669"/>
    <property type="project" value="InterPro"/>
</dbReference>
<dbReference type="GO" id="GO:0006412">
    <property type="term" value="P:translation"/>
    <property type="evidence" value="ECO:0007669"/>
    <property type="project" value="UniProtKB-UniRule"/>
</dbReference>
<dbReference type="CDD" id="cd00337">
    <property type="entry name" value="Ribosomal_uL14"/>
    <property type="match status" value="1"/>
</dbReference>
<dbReference type="FunFam" id="2.40.150.20:FF:000001">
    <property type="entry name" value="50S ribosomal protein L14"/>
    <property type="match status" value="1"/>
</dbReference>
<dbReference type="Gene3D" id="2.40.150.20">
    <property type="entry name" value="Ribosomal protein L14"/>
    <property type="match status" value="1"/>
</dbReference>
<dbReference type="HAMAP" id="MF_01367">
    <property type="entry name" value="Ribosomal_uL14"/>
    <property type="match status" value="1"/>
</dbReference>
<dbReference type="InterPro" id="IPR000218">
    <property type="entry name" value="Ribosomal_uL14"/>
</dbReference>
<dbReference type="InterPro" id="IPR005745">
    <property type="entry name" value="Ribosomal_uL14_bac-type"/>
</dbReference>
<dbReference type="InterPro" id="IPR019972">
    <property type="entry name" value="Ribosomal_uL14_CS"/>
</dbReference>
<dbReference type="InterPro" id="IPR036853">
    <property type="entry name" value="Ribosomal_uL14_sf"/>
</dbReference>
<dbReference type="NCBIfam" id="TIGR01067">
    <property type="entry name" value="rplN_bact"/>
    <property type="match status" value="1"/>
</dbReference>
<dbReference type="PANTHER" id="PTHR11761">
    <property type="entry name" value="50S/60S RIBOSOMAL PROTEIN L14/L23"/>
    <property type="match status" value="1"/>
</dbReference>
<dbReference type="PANTHER" id="PTHR11761:SF3">
    <property type="entry name" value="LARGE RIBOSOMAL SUBUNIT PROTEIN UL14M"/>
    <property type="match status" value="1"/>
</dbReference>
<dbReference type="Pfam" id="PF00238">
    <property type="entry name" value="Ribosomal_L14"/>
    <property type="match status" value="1"/>
</dbReference>
<dbReference type="SMART" id="SM01374">
    <property type="entry name" value="Ribosomal_L14"/>
    <property type="match status" value="1"/>
</dbReference>
<dbReference type="SUPFAM" id="SSF50193">
    <property type="entry name" value="Ribosomal protein L14"/>
    <property type="match status" value="1"/>
</dbReference>
<dbReference type="PROSITE" id="PS00049">
    <property type="entry name" value="RIBOSOMAL_L14"/>
    <property type="match status" value="1"/>
</dbReference>
<protein>
    <recommendedName>
        <fullName evidence="1">Large ribosomal subunit protein uL14</fullName>
    </recommendedName>
    <alternativeName>
        <fullName evidence="2">50S ribosomal protein L14</fullName>
    </alternativeName>
</protein>